<dbReference type="EMBL" id="CP000993">
    <property type="protein sequence ID" value="ACH94720.1"/>
    <property type="molecule type" value="Genomic_DNA"/>
</dbReference>
<dbReference type="RefSeq" id="WP_012538934.1">
    <property type="nucleotide sequence ID" value="NZ_CP169983.1"/>
</dbReference>
<dbReference type="SMR" id="B5RPI6"/>
<dbReference type="KEGG" id="bre:BRE_488"/>
<dbReference type="HOGENOM" id="CLU_144911_0_1_12"/>
<dbReference type="Proteomes" id="UP000000612">
    <property type="component" value="Chromosome"/>
</dbReference>
<dbReference type="GO" id="GO:0005737">
    <property type="term" value="C:cytoplasm"/>
    <property type="evidence" value="ECO:0007669"/>
    <property type="project" value="UniProtKB-ARBA"/>
</dbReference>
<dbReference type="GO" id="GO:0015935">
    <property type="term" value="C:small ribosomal subunit"/>
    <property type="evidence" value="ECO:0007669"/>
    <property type="project" value="InterPro"/>
</dbReference>
<dbReference type="GO" id="GO:0019843">
    <property type="term" value="F:rRNA binding"/>
    <property type="evidence" value="ECO:0007669"/>
    <property type="project" value="UniProtKB-UniRule"/>
</dbReference>
<dbReference type="GO" id="GO:0003735">
    <property type="term" value="F:structural constituent of ribosome"/>
    <property type="evidence" value="ECO:0007669"/>
    <property type="project" value="InterPro"/>
</dbReference>
<dbReference type="GO" id="GO:0000028">
    <property type="term" value="P:ribosomal small subunit assembly"/>
    <property type="evidence" value="ECO:0007669"/>
    <property type="project" value="TreeGrafter"/>
</dbReference>
<dbReference type="GO" id="GO:0006412">
    <property type="term" value="P:translation"/>
    <property type="evidence" value="ECO:0007669"/>
    <property type="project" value="UniProtKB-UniRule"/>
</dbReference>
<dbReference type="FunFam" id="3.30.860.10:FF:000001">
    <property type="entry name" value="30S ribosomal protein S19"/>
    <property type="match status" value="1"/>
</dbReference>
<dbReference type="Gene3D" id="3.30.860.10">
    <property type="entry name" value="30s Ribosomal Protein S19, Chain A"/>
    <property type="match status" value="1"/>
</dbReference>
<dbReference type="HAMAP" id="MF_00531">
    <property type="entry name" value="Ribosomal_uS19"/>
    <property type="match status" value="1"/>
</dbReference>
<dbReference type="InterPro" id="IPR002222">
    <property type="entry name" value="Ribosomal_uS19"/>
</dbReference>
<dbReference type="InterPro" id="IPR005732">
    <property type="entry name" value="Ribosomal_uS19_bac-type"/>
</dbReference>
<dbReference type="InterPro" id="IPR020934">
    <property type="entry name" value="Ribosomal_uS19_CS"/>
</dbReference>
<dbReference type="InterPro" id="IPR023575">
    <property type="entry name" value="Ribosomal_uS19_SF"/>
</dbReference>
<dbReference type="NCBIfam" id="TIGR01050">
    <property type="entry name" value="rpsS_bact"/>
    <property type="match status" value="1"/>
</dbReference>
<dbReference type="PANTHER" id="PTHR11880">
    <property type="entry name" value="RIBOSOMAL PROTEIN S19P FAMILY MEMBER"/>
    <property type="match status" value="1"/>
</dbReference>
<dbReference type="PANTHER" id="PTHR11880:SF8">
    <property type="entry name" value="SMALL RIBOSOMAL SUBUNIT PROTEIN US19M"/>
    <property type="match status" value="1"/>
</dbReference>
<dbReference type="Pfam" id="PF00203">
    <property type="entry name" value="Ribosomal_S19"/>
    <property type="match status" value="1"/>
</dbReference>
<dbReference type="PIRSF" id="PIRSF002144">
    <property type="entry name" value="Ribosomal_S19"/>
    <property type="match status" value="1"/>
</dbReference>
<dbReference type="PRINTS" id="PR00975">
    <property type="entry name" value="RIBOSOMALS19"/>
</dbReference>
<dbReference type="SUPFAM" id="SSF54570">
    <property type="entry name" value="Ribosomal protein S19"/>
    <property type="match status" value="1"/>
</dbReference>
<dbReference type="PROSITE" id="PS00323">
    <property type="entry name" value="RIBOSOMAL_S19"/>
    <property type="match status" value="1"/>
</dbReference>
<reference key="1">
    <citation type="journal article" date="2008" name="PLoS Genet.">
        <title>The genome of Borrelia recurrentis, the agent of deadly louse-borne relapsing fever, is a degraded subset of tick-borne Borrelia duttonii.</title>
        <authorList>
            <person name="Lescot M."/>
            <person name="Audic S."/>
            <person name="Robert C."/>
            <person name="Nguyen T.T."/>
            <person name="Blanc G."/>
            <person name="Cutler S.J."/>
            <person name="Wincker P."/>
            <person name="Couloux A."/>
            <person name="Claverie J.-M."/>
            <person name="Raoult D."/>
            <person name="Drancourt M."/>
        </authorList>
    </citation>
    <scope>NUCLEOTIDE SEQUENCE [LARGE SCALE GENOMIC DNA]</scope>
    <source>
        <strain>A1</strain>
    </source>
</reference>
<sequence length="92" mass="10331">MARSIKKGPFIEKSLYQKVLASSGKEKRVVIKTYSRASTIIPEMVSLTISVYNGKSFIPVYITEDLVGHKLGEFSPTRIFRGHAKSDKKGRK</sequence>
<evidence type="ECO:0000255" key="1">
    <source>
        <dbReference type="HAMAP-Rule" id="MF_00531"/>
    </source>
</evidence>
<evidence type="ECO:0000305" key="2"/>
<name>RS19_BORRA</name>
<organism>
    <name type="scientific">Borrelia recurrentis (strain A1)</name>
    <dbReference type="NCBI Taxonomy" id="412418"/>
    <lineage>
        <taxon>Bacteria</taxon>
        <taxon>Pseudomonadati</taxon>
        <taxon>Spirochaetota</taxon>
        <taxon>Spirochaetia</taxon>
        <taxon>Spirochaetales</taxon>
        <taxon>Borreliaceae</taxon>
        <taxon>Borrelia</taxon>
    </lineage>
</organism>
<protein>
    <recommendedName>
        <fullName evidence="1">Small ribosomal subunit protein uS19</fullName>
    </recommendedName>
    <alternativeName>
        <fullName evidence="2">30S ribosomal protein S19</fullName>
    </alternativeName>
</protein>
<accession>B5RPI6</accession>
<proteinExistence type="inferred from homology"/>
<comment type="function">
    <text evidence="1">Protein S19 forms a complex with S13 that binds strongly to the 16S ribosomal RNA.</text>
</comment>
<comment type="similarity">
    <text evidence="1">Belongs to the universal ribosomal protein uS19 family.</text>
</comment>
<gene>
    <name evidence="1" type="primary">rpsS</name>
    <name type="ordered locus">BRE_488</name>
</gene>
<feature type="chain" id="PRO_1000127936" description="Small ribosomal subunit protein uS19">
    <location>
        <begin position="1"/>
        <end position="92"/>
    </location>
</feature>
<keyword id="KW-0687">Ribonucleoprotein</keyword>
<keyword id="KW-0689">Ribosomal protein</keyword>
<keyword id="KW-0694">RNA-binding</keyword>
<keyword id="KW-0699">rRNA-binding</keyword>